<dbReference type="EMBL" id="D63351">
    <property type="protein sequence ID" value="BAA09675.1"/>
    <property type="molecule type" value="mRNA"/>
</dbReference>
<dbReference type="SMR" id="P79162"/>
<dbReference type="STRING" id="9925.ENSCHIP00000029274"/>
<dbReference type="Proteomes" id="UP000291000">
    <property type="component" value="Unassembled WGS sequence"/>
</dbReference>
<dbReference type="Proteomes" id="UP000694566">
    <property type="component" value="Unplaced"/>
</dbReference>
<dbReference type="GO" id="GO:0005829">
    <property type="term" value="C:cytosol"/>
    <property type="evidence" value="ECO:0007669"/>
    <property type="project" value="UniProtKB-SubCell"/>
</dbReference>
<dbReference type="GO" id="GO:0005615">
    <property type="term" value="C:extracellular space"/>
    <property type="evidence" value="ECO:0007669"/>
    <property type="project" value="UniProtKB-KW"/>
</dbReference>
<dbReference type="GO" id="GO:0005764">
    <property type="term" value="C:lysosome"/>
    <property type="evidence" value="ECO:0007669"/>
    <property type="project" value="UniProtKB-SubCell"/>
</dbReference>
<dbReference type="GO" id="GO:0005125">
    <property type="term" value="F:cytokine activity"/>
    <property type="evidence" value="ECO:0007669"/>
    <property type="project" value="UniProtKB-KW"/>
</dbReference>
<dbReference type="GO" id="GO:0005178">
    <property type="term" value="F:integrin binding"/>
    <property type="evidence" value="ECO:0000250"/>
    <property type="project" value="UniProtKB"/>
</dbReference>
<dbReference type="GO" id="GO:0005149">
    <property type="term" value="F:interleukin-1 receptor binding"/>
    <property type="evidence" value="ECO:0007669"/>
    <property type="project" value="InterPro"/>
</dbReference>
<dbReference type="GO" id="GO:0071222">
    <property type="term" value="P:cellular response to lipopolysaccharide"/>
    <property type="evidence" value="ECO:0007669"/>
    <property type="project" value="TreeGrafter"/>
</dbReference>
<dbReference type="GO" id="GO:0019221">
    <property type="term" value="P:cytokine-mediated signaling pathway"/>
    <property type="evidence" value="ECO:0007669"/>
    <property type="project" value="TreeGrafter"/>
</dbReference>
<dbReference type="GO" id="GO:0001660">
    <property type="term" value="P:fever generation"/>
    <property type="evidence" value="ECO:0007669"/>
    <property type="project" value="UniProtKB-KW"/>
</dbReference>
<dbReference type="GO" id="GO:0006955">
    <property type="term" value="P:immune response"/>
    <property type="evidence" value="ECO:0007669"/>
    <property type="project" value="InterPro"/>
</dbReference>
<dbReference type="GO" id="GO:0051781">
    <property type="term" value="P:positive regulation of cell division"/>
    <property type="evidence" value="ECO:0007669"/>
    <property type="project" value="UniProtKB-KW"/>
</dbReference>
<dbReference type="GO" id="GO:0033092">
    <property type="term" value="P:positive regulation of immature T cell proliferation in thymus"/>
    <property type="evidence" value="ECO:0007669"/>
    <property type="project" value="TreeGrafter"/>
</dbReference>
<dbReference type="GO" id="GO:2000556">
    <property type="term" value="P:positive regulation of T-helper 1 cell cytokine production"/>
    <property type="evidence" value="ECO:0000250"/>
    <property type="project" value="UniProtKB"/>
</dbReference>
<dbReference type="GO" id="GO:0032729">
    <property type="term" value="P:positive regulation of type II interferon production"/>
    <property type="evidence" value="ECO:0000250"/>
    <property type="project" value="UniProtKB"/>
</dbReference>
<dbReference type="GO" id="GO:0010573">
    <property type="term" value="P:vascular endothelial growth factor production"/>
    <property type="evidence" value="ECO:0000250"/>
    <property type="project" value="UniProtKB"/>
</dbReference>
<dbReference type="CDD" id="cd23296">
    <property type="entry name" value="beta-trefoil_IL1B"/>
    <property type="match status" value="1"/>
</dbReference>
<dbReference type="FunFam" id="2.80.10.50:FF:000027">
    <property type="entry name" value="Interleukin-1 beta"/>
    <property type="match status" value="1"/>
</dbReference>
<dbReference type="Gene3D" id="2.80.10.50">
    <property type="match status" value="1"/>
</dbReference>
<dbReference type="InterPro" id="IPR020877">
    <property type="entry name" value="IL-1_CS"/>
</dbReference>
<dbReference type="InterPro" id="IPR000975">
    <property type="entry name" value="IL-1_fam"/>
</dbReference>
<dbReference type="InterPro" id="IPR003502">
    <property type="entry name" value="IL-1_propep"/>
</dbReference>
<dbReference type="InterPro" id="IPR008996">
    <property type="entry name" value="IL1/FGF"/>
</dbReference>
<dbReference type="PANTHER" id="PTHR10078:SF30">
    <property type="entry name" value="INTERLEUKIN-1 BETA"/>
    <property type="match status" value="1"/>
</dbReference>
<dbReference type="PANTHER" id="PTHR10078">
    <property type="entry name" value="INTERLEUKIN-1 FAMILY MEMBER"/>
    <property type="match status" value="1"/>
</dbReference>
<dbReference type="Pfam" id="PF00340">
    <property type="entry name" value="IL1"/>
    <property type="match status" value="1"/>
</dbReference>
<dbReference type="Pfam" id="PF02394">
    <property type="entry name" value="IL1_propep"/>
    <property type="match status" value="1"/>
</dbReference>
<dbReference type="PRINTS" id="PR00262">
    <property type="entry name" value="IL1HBGF"/>
</dbReference>
<dbReference type="PRINTS" id="PR00264">
    <property type="entry name" value="INTERLEUKIN1"/>
</dbReference>
<dbReference type="PRINTS" id="PR01359">
    <property type="entry name" value="INTRLEUKIN1B"/>
</dbReference>
<dbReference type="PRINTS" id="PR01357">
    <property type="entry name" value="INTRLEUKN1AB"/>
</dbReference>
<dbReference type="SMART" id="SM00125">
    <property type="entry name" value="IL1"/>
    <property type="match status" value="1"/>
</dbReference>
<dbReference type="SUPFAM" id="SSF50353">
    <property type="entry name" value="Cytokine"/>
    <property type="match status" value="1"/>
</dbReference>
<dbReference type="PROSITE" id="PS00253">
    <property type="entry name" value="INTERLEUKIN_1"/>
    <property type="match status" value="1"/>
</dbReference>
<keyword id="KW-0202">Cytokine</keyword>
<keyword id="KW-0963">Cytoplasm</keyword>
<keyword id="KW-0395">Inflammatory response</keyword>
<keyword id="KW-0458">Lysosome</keyword>
<keyword id="KW-0497">Mitogen</keyword>
<keyword id="KW-0666">Pyrogen</keyword>
<keyword id="KW-1185">Reference proteome</keyword>
<keyword id="KW-0964">Secreted</keyword>
<comment type="function">
    <text evidence="2">Potent pro-inflammatory cytokine. Initially discovered as the major endogenous pyrogen, induces prostaglandin synthesis, neutrophil influx and activation, T-cell activation and cytokine production, B-cell activation and antibody production, and fibroblast proliferation and collagen production. Promotes Th17 differentiation of T-cells. Synergizes with IL12/interleukin-12 to induce IFNG synthesis from T-helper 1 (Th1) cells. Plays a role in angiogenesis by inducing VEGF production synergistically with TNF and IL6. Involved in transduction of inflammation downstream of pyroptosis: its mature form is specifically released in the extracellular milieu by passing through the gasdermin-D (GSDMD) pore.</text>
</comment>
<comment type="subunit">
    <text evidence="2">Monomer. In its precursor form, weakly interacts with full-length MEFV; the mature cytokine does not interact at all. Interacts with integrins ITGAV:ITGBV and ITGA5:ITGB1; integrin-binding is required for IL1B signaling. Interacts with cargo receptor TMED10; the interaction is direct and is required for the secretion of IL1B mature form. Interacts with HSP90AB1; the interaction facilitates cargo translocation into the ERGIC. Interacts with HSP90B1; the interaction facilitates cargo translocation into the ERGIC.</text>
</comment>
<comment type="subcellular location">
    <subcellularLocation>
        <location evidence="2">Cytoplasm</location>
        <location evidence="2">Cytosol</location>
    </subcellularLocation>
    <subcellularLocation>
        <location evidence="2">Secreted</location>
    </subcellularLocation>
    <subcellularLocation>
        <location evidence="2">Lysosome</location>
    </subcellularLocation>
    <subcellularLocation>
        <location evidence="3">Secreted</location>
        <location evidence="3">Extracellular exosome</location>
    </subcellularLocation>
    <text evidence="2">The precursor is cytosolic. In response to inflammasome-activating signals, such as ATP for NLRP3 inflammasome or bacterial flagellin for NLRC4 inflammasome, cleaved and secreted. Mature form is secreted and released in the extracellular milieu by passing through the gasdermin-D (GSDMD) pore. In contrast, the precursor form is not released, due to the presence of an acidic region that is proteolytically removed by CASP1 during maturation. The secretion is dependent on protein unfolding and facilitated by the cargo receptor TMED10.</text>
</comment>
<comment type="miscellaneous">
    <text evidence="1">IL1B production occurs in 2 steps, each being controlled by different stimuli. First, inflammatory signals, such as LPS, stimulate the synthesis and promote the accumulation of cytosolic stores of pro-IL1B (priming). Then additional signals are required for inflammasome assembly, leading to CASP1 activation, pro-IL1B processing and eventually secretion of the active cytokine. IL1B processing and secretion are temporarily associated.</text>
</comment>
<comment type="similarity">
    <text evidence="4">Belongs to the IL-1 family.</text>
</comment>
<organism>
    <name type="scientific">Capra hircus</name>
    <name type="common">Goat</name>
    <dbReference type="NCBI Taxonomy" id="9925"/>
    <lineage>
        <taxon>Eukaryota</taxon>
        <taxon>Metazoa</taxon>
        <taxon>Chordata</taxon>
        <taxon>Craniata</taxon>
        <taxon>Vertebrata</taxon>
        <taxon>Euteleostomi</taxon>
        <taxon>Mammalia</taxon>
        <taxon>Eutheria</taxon>
        <taxon>Laurasiatheria</taxon>
        <taxon>Artiodactyla</taxon>
        <taxon>Ruminantia</taxon>
        <taxon>Pecora</taxon>
        <taxon>Bovidae</taxon>
        <taxon>Caprinae</taxon>
        <taxon>Capra</taxon>
    </lineage>
</organism>
<feature type="propeptide" id="PRO_0000015287" evidence="1">
    <location>
        <begin position="1"/>
        <end position="113"/>
    </location>
</feature>
<feature type="chain" id="PRO_0000015288" description="Interleukin-1 beta">
    <location>
        <begin position="114"/>
        <end position="266"/>
    </location>
</feature>
<feature type="site" description="Important for interaction with integrin" evidence="2">
    <location>
        <position position="168"/>
    </location>
</feature>
<feature type="site" description="Important for interaction with integrin" evidence="2">
    <location>
        <position position="178"/>
    </location>
</feature>
<feature type="site" description="Important for interaction with integrin" evidence="2">
    <location>
        <position position="187"/>
    </location>
</feature>
<feature type="site" description="Important for interaction with integrin" evidence="2">
    <location>
        <position position="201"/>
    </location>
</feature>
<sequence length="266" mass="30769">MATVPEPINEVMAYYSDENELLFEADGPKQMKSCTQHLDLGSMGDGNIQLQISHQLYNKSFRQVVSVIVAMEKLRSRAYEHVFRDDDLRSILSFIFEEEPVIFETSSDELLCDAAVQSVKCKLQDREQKSLVLDSPCVLKALHLLSQEMSREVVFCMSFVQGEERDNKIPVALGIRDKNLYLSWVKKGDTPTLQLEEVDPKVYPKRNMEKRFVFYKTEIKNTVEFESVLYPNWYISTSQIEEKPVFLGHFRGGQDITDFRMETLSP</sequence>
<evidence type="ECO:0000250" key="1"/>
<evidence type="ECO:0000250" key="2">
    <source>
        <dbReference type="UniProtKB" id="P01584"/>
    </source>
</evidence>
<evidence type="ECO:0000250" key="3">
    <source>
        <dbReference type="UniProtKB" id="P10749"/>
    </source>
</evidence>
<evidence type="ECO:0000305" key="4"/>
<protein>
    <recommendedName>
        <fullName>Interleukin-1 beta</fullName>
        <shortName>IL-1 beta</shortName>
    </recommendedName>
</protein>
<accession>P79162</accession>
<reference key="1">
    <citation type="submission" date="1995-06" db="EMBL/GenBank/DDBJ databases">
        <title>Molecular cloning and expression of caprine IL-1alpha and IL-1beta.</title>
        <authorList>
            <person name="Takakura H."/>
            <person name="Hashimoto O."/>
            <person name="Mori Y."/>
            <person name="Tatsumi M."/>
        </authorList>
    </citation>
    <scope>NUCLEOTIDE SEQUENCE [MRNA]</scope>
</reference>
<name>IL1B_CAPHI</name>
<proteinExistence type="evidence at transcript level"/>
<gene>
    <name type="primary">IL1B</name>
</gene>